<comment type="subcellular location">
    <subcellularLocation>
        <location evidence="5">Cell membrane</location>
        <topology evidence="5">Single-pass membrane protein</topology>
    </subcellularLocation>
    <text evidence="4">Localizes to the division septum during vegetative growth, and accumulates at the prespore during sporulation.</text>
</comment>
<comment type="developmental stage">
    <text evidence="4">Expressed during vegetative growth and sporulation.</text>
</comment>
<comment type="induction">
    <text evidence="3">Up-regulated by sigma-X and sigma-W factors.</text>
</comment>
<comment type="disruption phenotype">
    <text evidence="4">Cells lacking this gene display no visible phenotype during vegetative growth or sporulation.</text>
</comment>
<comment type="similarity">
    <text evidence="5">Belongs to the beta-lactamase family.</text>
</comment>
<organism>
    <name type="scientific">Bacillus subtilis (strain 168)</name>
    <dbReference type="NCBI Taxonomy" id="224308"/>
    <lineage>
        <taxon>Bacteria</taxon>
        <taxon>Bacillati</taxon>
        <taxon>Bacillota</taxon>
        <taxon>Bacilli</taxon>
        <taxon>Bacillales</taxon>
        <taxon>Bacillaceae</taxon>
        <taxon>Bacillus</taxon>
    </lineage>
</organism>
<reference key="1">
    <citation type="journal article" date="1997" name="Nature">
        <title>The complete genome sequence of the Gram-positive bacterium Bacillus subtilis.</title>
        <authorList>
            <person name="Kunst F."/>
            <person name="Ogasawara N."/>
            <person name="Moszer I."/>
            <person name="Albertini A.M."/>
            <person name="Alloni G."/>
            <person name="Azevedo V."/>
            <person name="Bertero M.G."/>
            <person name="Bessieres P."/>
            <person name="Bolotin A."/>
            <person name="Borchert S."/>
            <person name="Borriss R."/>
            <person name="Boursier L."/>
            <person name="Brans A."/>
            <person name="Braun M."/>
            <person name="Brignell S.C."/>
            <person name="Bron S."/>
            <person name="Brouillet S."/>
            <person name="Bruschi C.V."/>
            <person name="Caldwell B."/>
            <person name="Capuano V."/>
            <person name="Carter N.M."/>
            <person name="Choi S.-K."/>
            <person name="Codani J.-J."/>
            <person name="Connerton I.F."/>
            <person name="Cummings N.J."/>
            <person name="Daniel R.A."/>
            <person name="Denizot F."/>
            <person name="Devine K.M."/>
            <person name="Duesterhoeft A."/>
            <person name="Ehrlich S.D."/>
            <person name="Emmerson P.T."/>
            <person name="Entian K.-D."/>
            <person name="Errington J."/>
            <person name="Fabret C."/>
            <person name="Ferrari E."/>
            <person name="Foulger D."/>
            <person name="Fritz C."/>
            <person name="Fujita M."/>
            <person name="Fujita Y."/>
            <person name="Fuma S."/>
            <person name="Galizzi A."/>
            <person name="Galleron N."/>
            <person name="Ghim S.-Y."/>
            <person name="Glaser P."/>
            <person name="Goffeau A."/>
            <person name="Golightly E.J."/>
            <person name="Grandi G."/>
            <person name="Guiseppi G."/>
            <person name="Guy B.J."/>
            <person name="Haga K."/>
            <person name="Haiech J."/>
            <person name="Harwood C.R."/>
            <person name="Henaut A."/>
            <person name="Hilbert H."/>
            <person name="Holsappel S."/>
            <person name="Hosono S."/>
            <person name="Hullo M.-F."/>
            <person name="Itaya M."/>
            <person name="Jones L.-M."/>
            <person name="Joris B."/>
            <person name="Karamata D."/>
            <person name="Kasahara Y."/>
            <person name="Klaerr-Blanchard M."/>
            <person name="Klein C."/>
            <person name="Kobayashi Y."/>
            <person name="Koetter P."/>
            <person name="Koningstein G."/>
            <person name="Krogh S."/>
            <person name="Kumano M."/>
            <person name="Kurita K."/>
            <person name="Lapidus A."/>
            <person name="Lardinois S."/>
            <person name="Lauber J."/>
            <person name="Lazarevic V."/>
            <person name="Lee S.-M."/>
            <person name="Levine A."/>
            <person name="Liu H."/>
            <person name="Masuda S."/>
            <person name="Mauel C."/>
            <person name="Medigue C."/>
            <person name="Medina N."/>
            <person name="Mellado R.P."/>
            <person name="Mizuno M."/>
            <person name="Moestl D."/>
            <person name="Nakai S."/>
            <person name="Noback M."/>
            <person name="Noone D."/>
            <person name="O'Reilly M."/>
            <person name="Ogawa K."/>
            <person name="Ogiwara A."/>
            <person name="Oudega B."/>
            <person name="Park S.-H."/>
            <person name="Parro V."/>
            <person name="Pohl T.M."/>
            <person name="Portetelle D."/>
            <person name="Porwollik S."/>
            <person name="Prescott A.M."/>
            <person name="Presecan E."/>
            <person name="Pujic P."/>
            <person name="Purnelle B."/>
            <person name="Rapoport G."/>
            <person name="Rey M."/>
            <person name="Reynolds S."/>
            <person name="Rieger M."/>
            <person name="Rivolta C."/>
            <person name="Rocha E."/>
            <person name="Roche B."/>
            <person name="Rose M."/>
            <person name="Sadaie Y."/>
            <person name="Sato T."/>
            <person name="Scanlan E."/>
            <person name="Schleich S."/>
            <person name="Schroeter R."/>
            <person name="Scoffone F."/>
            <person name="Sekiguchi J."/>
            <person name="Sekowska A."/>
            <person name="Seror S.J."/>
            <person name="Serror P."/>
            <person name="Shin B.-S."/>
            <person name="Soldo B."/>
            <person name="Sorokin A."/>
            <person name="Tacconi E."/>
            <person name="Takagi T."/>
            <person name="Takahashi H."/>
            <person name="Takemaru K."/>
            <person name="Takeuchi M."/>
            <person name="Tamakoshi A."/>
            <person name="Tanaka T."/>
            <person name="Terpstra P."/>
            <person name="Tognoni A."/>
            <person name="Tosato V."/>
            <person name="Uchiyama S."/>
            <person name="Vandenbol M."/>
            <person name="Vannier F."/>
            <person name="Vassarotti A."/>
            <person name="Viari A."/>
            <person name="Wambutt R."/>
            <person name="Wedler E."/>
            <person name="Wedler H."/>
            <person name="Weitzenegger T."/>
            <person name="Winters P."/>
            <person name="Wipat A."/>
            <person name="Yamamoto H."/>
            <person name="Yamane K."/>
            <person name="Yasumoto K."/>
            <person name="Yata K."/>
            <person name="Yoshida K."/>
            <person name="Yoshikawa H.-F."/>
            <person name="Zumstein E."/>
            <person name="Yoshikawa H."/>
            <person name="Danchin A."/>
        </authorList>
    </citation>
    <scope>NUCLEOTIDE SEQUENCE [LARGE SCALE GENOMIC DNA]</scope>
    <source>
        <strain>168</strain>
    </source>
</reference>
<reference key="2">
    <citation type="journal article" date="2004" name="J. Bacteriol.">
        <title>The Bacillus subtilis extracytoplasmic-function sigmaX factor regulates modification of the cell envelope and resistance to cationic antimicrobial peptides.</title>
        <authorList>
            <person name="Cao M."/>
            <person name="Helmann J.D."/>
        </authorList>
    </citation>
    <scope>INDUCTION BY SIGMA FACTORS</scope>
    <source>
        <strain>168 / CU1065</strain>
    </source>
</reference>
<reference key="3">
    <citation type="journal article" date="2005" name="Microbiology">
        <title>Dynamic localization of penicillin-binding proteins during spore development in Bacillus subtilis.</title>
        <authorList>
            <person name="Scheffers D.-J."/>
        </authorList>
    </citation>
    <scope>SUBCELLULAR LOCATION</scope>
    <scope>DEVELOPMENTAL STAGE</scope>
    <scope>DISRUPTION PHENOTYPE</scope>
    <source>
        <strain>168</strain>
    </source>
</reference>
<gene>
    <name type="primary">pbpX</name>
    <name type="ordered locus">BSU16950</name>
</gene>
<name>PBPX_BACSU</name>
<proteinExistence type="evidence at transcript level"/>
<feature type="chain" id="PRO_0000384401" description="Putative penicillin-binding protein PbpX">
    <location>
        <begin position="1"/>
        <end position="391"/>
    </location>
</feature>
<feature type="transmembrane region" description="Helical" evidence="1">
    <location>
        <begin position="21"/>
        <end position="40"/>
    </location>
</feature>
<feature type="region of interest" description="Disordered" evidence="2">
    <location>
        <begin position="44"/>
        <end position="76"/>
    </location>
</feature>
<feature type="compositionally biased region" description="Polar residues" evidence="2">
    <location>
        <begin position="50"/>
        <end position="59"/>
    </location>
</feature>
<keyword id="KW-1003">Cell membrane</keyword>
<keyword id="KW-0472">Membrane</keyword>
<keyword id="KW-1185">Reference proteome</keyword>
<keyword id="KW-0749">Sporulation</keyword>
<keyword id="KW-0812">Transmembrane</keyword>
<keyword id="KW-1133">Transmembrane helix</keyword>
<sequence>MTSPTRRRTAKRRRRKLNKRGKLLFGLLAVMVCITIWNALHRNSEENEPSQETAAVSNTDQKKEVKKKTAKKSEEQIKTVDRNQKISNYLKEIGFSGTAMIVRNGEIVTNKGFGYADRKHYIQNNPLTSFYVGSSQKALIATAILQLEEKGKLQTSDPVSTYLPHFPNGQTITLKNLLTHTSGINGHIEGNGAITPDDLIKDIELQGIKRQPGVWDYKDSNYSVLAYIIAEVSGEPYEQYIKNHIFKPAGMTHAGFYKTYEKEPYPAVGYKMEGSKTVTPYIPDLSQLYGAGDIYMSAIDMYKFDQALIDGKLYSQKSYEKMFTPGSSSTYGMGFYVAPGSYSNHGVMPGFNILNSFSKSGQTIVILFSNIQNNAKLGQVNNKIYQLLNQE</sequence>
<evidence type="ECO:0000255" key="1"/>
<evidence type="ECO:0000256" key="2">
    <source>
        <dbReference type="SAM" id="MobiDB-lite"/>
    </source>
</evidence>
<evidence type="ECO:0000269" key="3">
    <source>
    </source>
</evidence>
<evidence type="ECO:0000269" key="4">
    <source>
    </source>
</evidence>
<evidence type="ECO:0000305" key="5"/>
<protein>
    <recommendedName>
        <fullName>Putative penicillin-binding protein PbpX</fullName>
    </recommendedName>
</protein>
<accession>O31773</accession>
<dbReference type="EMBL" id="AL009126">
    <property type="protein sequence ID" value="CAB13568.1"/>
    <property type="molecule type" value="Genomic_DNA"/>
</dbReference>
<dbReference type="PIR" id="C69673">
    <property type="entry name" value="C69673"/>
</dbReference>
<dbReference type="RefSeq" id="NP_389577.1">
    <property type="nucleotide sequence ID" value="NC_000964.3"/>
</dbReference>
<dbReference type="RefSeq" id="WP_003245877.1">
    <property type="nucleotide sequence ID" value="NZ_OZ025638.1"/>
</dbReference>
<dbReference type="SMR" id="O31773"/>
<dbReference type="FunCoup" id="O31773">
    <property type="interactions" value="153"/>
</dbReference>
<dbReference type="STRING" id="224308.BSU16950"/>
<dbReference type="MEROPS" id="S12.A21"/>
<dbReference type="PaxDb" id="224308-BSU16950"/>
<dbReference type="EnsemblBacteria" id="CAB13568">
    <property type="protein sequence ID" value="CAB13568"/>
    <property type="gene ID" value="BSU_16950"/>
</dbReference>
<dbReference type="GeneID" id="939677"/>
<dbReference type="KEGG" id="bsu:BSU16950"/>
<dbReference type="PATRIC" id="fig|224308.179.peg.1836"/>
<dbReference type="eggNOG" id="COG1680">
    <property type="taxonomic scope" value="Bacteria"/>
</dbReference>
<dbReference type="InParanoid" id="O31773"/>
<dbReference type="OrthoDB" id="9803467at2"/>
<dbReference type="PhylomeDB" id="O31773"/>
<dbReference type="BioCyc" id="BSUB:BSU16950-MONOMER"/>
<dbReference type="Proteomes" id="UP000001570">
    <property type="component" value="Chromosome"/>
</dbReference>
<dbReference type="GO" id="GO:0005886">
    <property type="term" value="C:plasma membrane"/>
    <property type="evidence" value="ECO:0007669"/>
    <property type="project" value="UniProtKB-SubCell"/>
</dbReference>
<dbReference type="GO" id="GO:0030435">
    <property type="term" value="P:sporulation resulting in formation of a cellular spore"/>
    <property type="evidence" value="ECO:0007669"/>
    <property type="project" value="UniProtKB-KW"/>
</dbReference>
<dbReference type="Gene3D" id="3.40.710.10">
    <property type="entry name" value="DD-peptidase/beta-lactamase superfamily"/>
    <property type="match status" value="1"/>
</dbReference>
<dbReference type="InterPro" id="IPR050491">
    <property type="entry name" value="Bact_CellWall_Synth/Modif"/>
</dbReference>
<dbReference type="InterPro" id="IPR001466">
    <property type="entry name" value="Beta-lactam-related"/>
</dbReference>
<dbReference type="InterPro" id="IPR012338">
    <property type="entry name" value="Beta-lactam/transpept-like"/>
</dbReference>
<dbReference type="PANTHER" id="PTHR46825">
    <property type="entry name" value="D-ALANYL-D-ALANINE-CARBOXYPEPTIDASE/ENDOPEPTIDASE AMPH"/>
    <property type="match status" value="1"/>
</dbReference>
<dbReference type="PANTHER" id="PTHR46825:SF11">
    <property type="entry name" value="PENICILLIN-BINDING PROTEIN 4"/>
    <property type="match status" value="1"/>
</dbReference>
<dbReference type="Pfam" id="PF00144">
    <property type="entry name" value="Beta-lactamase"/>
    <property type="match status" value="1"/>
</dbReference>
<dbReference type="SUPFAM" id="SSF56601">
    <property type="entry name" value="beta-lactamase/transpeptidase-like"/>
    <property type="match status" value="1"/>
</dbReference>